<keyword id="KW-0106">Calcium</keyword>
<keyword id="KW-1003">Cell membrane</keyword>
<keyword id="KW-1015">Disulfide bond</keyword>
<keyword id="KW-0297">G-protein coupled receptor</keyword>
<keyword id="KW-0325">Glycoprotein</keyword>
<keyword id="KW-0433">Leucine-rich repeat</keyword>
<keyword id="KW-0472">Membrane</keyword>
<keyword id="KW-0479">Metal-binding</keyword>
<keyword id="KW-0675">Receptor</keyword>
<keyword id="KW-1185">Reference proteome</keyword>
<keyword id="KW-0677">Repeat</keyword>
<keyword id="KW-0807">Transducer</keyword>
<keyword id="KW-0812">Transmembrane</keyword>
<keyword id="KW-1133">Transmembrane helix</keyword>
<proteinExistence type="evidence at transcript level"/>
<sequence>MTSGPFFFCIFIIGKYFTLGSAQDVSCPLGSFPCGNMSRCLPQLLHCNGVDDCGNRADEDHCGDNNGWSLQLDKYFANYYKLASTNSFEAETSECLVGSVPMHCLCRDLELDCDEANLRAVPSVSSNVTVMSLQRNFIRTLPPNGFRKYHELQKLCLQNNRIHSVSVSAFRGLRSLTKLYLSHNRITFLKPGVFEDLHRLEWLIIEDNHLSRISPLTFYGLNSLILLVLMNNALTRLPDKPLCQHMPRLHWLDFEGNRIHNLRNLTFISCNNLTVLVMRKNKINYLNEHAFTHLQKLDELDLGSNKIENLPPNIFKDLKELSQLNISYNPIQKIEVNQFDCLAKLKSLSLEGIEISNIQQRMFRPLINLSHIYFKKFQYCGYAPHVRSCKPNTDGISSLENLLASIIQRVFVWVVSAITCFGNIFVICMRPYIRSENKLHAMSIISLCCADCLMGVYLFVIGAFDLKFRGEYNKHAQPWMESVHCQFMGSLAILSTEVSVLLLTFLTLEKYICIVYPFRCLRPRKCRTITVLIFIWIIGFIVAFAPLGNKEFFKNYYGTNGVCFPLHSEDTGSTGAQIYSVVIFLGINLVAFIIIVFSYGSMFYSVHQSSVTVTEIQKQVKKEVVLAKRFFFIVFTDALCWIPIFILKFLSLLQVEIPDSITSWVVIFILPINSALNPIIYTLTTRPFKEMIHQLWHNYRQRRSVDRKETQKAYAPSFIWVEMWPLQEMSSGFMKPGAFTDPCDLSLVSQSSRLNSYS</sequence>
<organism>
    <name type="scientific">Mus musculus</name>
    <name type="common">Mouse</name>
    <dbReference type="NCBI Taxonomy" id="10090"/>
    <lineage>
        <taxon>Eukaryota</taxon>
        <taxon>Metazoa</taxon>
        <taxon>Chordata</taxon>
        <taxon>Craniata</taxon>
        <taxon>Vertebrata</taxon>
        <taxon>Euteleostomi</taxon>
        <taxon>Mammalia</taxon>
        <taxon>Eutheria</taxon>
        <taxon>Euarchontoglires</taxon>
        <taxon>Glires</taxon>
        <taxon>Rodentia</taxon>
        <taxon>Myomorpha</taxon>
        <taxon>Muroidea</taxon>
        <taxon>Muridae</taxon>
        <taxon>Murinae</taxon>
        <taxon>Mus</taxon>
        <taxon>Mus</taxon>
    </lineage>
</organism>
<accession>Q6R6I7</accession>
<accession>Q80UD3</accession>
<dbReference type="EMBL" id="AY509975">
    <property type="protein sequence ID" value="AAR97515.1"/>
    <property type="molecule type" value="mRNA"/>
</dbReference>
<dbReference type="EMBL" id="AY255542">
    <property type="protein sequence ID" value="AAO85054.1"/>
    <property type="molecule type" value="mRNA"/>
</dbReference>
<dbReference type="CCDS" id="CCDS17420.1"/>
<dbReference type="RefSeq" id="NP_997617.1">
    <property type="nucleotide sequence ID" value="NM_212452.3"/>
</dbReference>
<dbReference type="SMR" id="Q6R6I7"/>
<dbReference type="BioGRID" id="237962">
    <property type="interactions" value="1"/>
</dbReference>
<dbReference type="FunCoup" id="Q6R6I7">
    <property type="interactions" value="404"/>
</dbReference>
<dbReference type="STRING" id="10090.ENSMUSP00000077611"/>
<dbReference type="ChEMBL" id="CHEMBL3714701"/>
<dbReference type="GuidetoPHARMACOLOGY" id="351"/>
<dbReference type="GlyCosmos" id="Q6R6I7">
    <property type="glycosylation" value="6 sites, No reported glycans"/>
</dbReference>
<dbReference type="GlyGen" id="Q6R6I7">
    <property type="glycosylation" value="6 sites, 3 N-linked glycans (4 sites)"/>
</dbReference>
<dbReference type="PhosphoSitePlus" id="Q6R6I7"/>
<dbReference type="PaxDb" id="10090-ENSMUSP00000077611"/>
<dbReference type="PeptideAtlas" id="Q6R6I7"/>
<dbReference type="ProteomicsDB" id="255429"/>
<dbReference type="ABCD" id="Q6R6I7">
    <property type="antibodies" value="2 sequenced antibodies"/>
</dbReference>
<dbReference type="Antibodypedia" id="7543">
    <property type="antibodies" value="341 antibodies from 33 providers"/>
</dbReference>
<dbReference type="DNASU" id="381489"/>
<dbReference type="Ensembl" id="ENSMUST00000078527.13">
    <property type="protein sequence ID" value="ENSMUSP00000077611.6"/>
    <property type="gene ID" value="ENSMUSG00000034009.15"/>
</dbReference>
<dbReference type="GeneID" id="381489"/>
<dbReference type="KEGG" id="mmu:381489"/>
<dbReference type="UCSC" id="uc008pnv.1">
    <property type="organism name" value="mouse"/>
</dbReference>
<dbReference type="AGR" id="MGI:2682211"/>
<dbReference type="CTD" id="59350"/>
<dbReference type="MGI" id="MGI:2682211">
    <property type="gene designation" value="Rxfp1"/>
</dbReference>
<dbReference type="VEuPathDB" id="HostDB:ENSMUSG00000034009"/>
<dbReference type="eggNOG" id="KOG0619">
    <property type="taxonomic scope" value="Eukaryota"/>
</dbReference>
<dbReference type="eggNOG" id="KOG2087">
    <property type="taxonomic scope" value="Eukaryota"/>
</dbReference>
<dbReference type="GeneTree" id="ENSGT00940000158241"/>
<dbReference type="HOGENOM" id="CLU_006130_2_1_1"/>
<dbReference type="InParanoid" id="Q6R6I7"/>
<dbReference type="OMA" id="ALMPIHI"/>
<dbReference type="OrthoDB" id="6022531at2759"/>
<dbReference type="PhylomeDB" id="Q6R6I7"/>
<dbReference type="TreeFam" id="TF326185"/>
<dbReference type="Reactome" id="R-MMU-418555">
    <property type="pathway name" value="G alpha (s) signalling events"/>
</dbReference>
<dbReference type="Reactome" id="R-MMU-444821">
    <property type="pathway name" value="Relaxin receptors"/>
</dbReference>
<dbReference type="BioGRID-ORCS" id="381489">
    <property type="hits" value="4 hits in 78 CRISPR screens"/>
</dbReference>
<dbReference type="ChiTaRS" id="Rxfp1">
    <property type="organism name" value="mouse"/>
</dbReference>
<dbReference type="PRO" id="PR:Q6R6I7"/>
<dbReference type="Proteomes" id="UP000000589">
    <property type="component" value="Chromosome 3"/>
</dbReference>
<dbReference type="RNAct" id="Q6R6I7">
    <property type="molecule type" value="protein"/>
</dbReference>
<dbReference type="Bgee" id="ENSMUSG00000034009">
    <property type="expression patterns" value="Expressed in uterus and 26 other cell types or tissues"/>
</dbReference>
<dbReference type="ExpressionAtlas" id="Q6R6I7">
    <property type="expression patterns" value="baseline and differential"/>
</dbReference>
<dbReference type="GO" id="GO:0005886">
    <property type="term" value="C:plasma membrane"/>
    <property type="evidence" value="ECO:0007669"/>
    <property type="project" value="UniProtKB-SubCell"/>
</dbReference>
<dbReference type="GO" id="GO:0004930">
    <property type="term" value="F:G protein-coupled receptor activity"/>
    <property type="evidence" value="ECO:0000266"/>
    <property type="project" value="MGI"/>
</dbReference>
<dbReference type="GO" id="GO:0042562">
    <property type="term" value="F:hormone binding"/>
    <property type="evidence" value="ECO:0000314"/>
    <property type="project" value="MGI"/>
</dbReference>
<dbReference type="GO" id="GO:0046872">
    <property type="term" value="F:metal ion binding"/>
    <property type="evidence" value="ECO:0007669"/>
    <property type="project" value="UniProtKB-KW"/>
</dbReference>
<dbReference type="GO" id="GO:0007188">
    <property type="term" value="P:adenylate cyclase-modulating G protein-coupled receptor signaling pathway"/>
    <property type="evidence" value="ECO:0000314"/>
    <property type="project" value="MGI"/>
</dbReference>
<dbReference type="GO" id="GO:0030198">
    <property type="term" value="P:extracellular matrix organization"/>
    <property type="evidence" value="ECO:0000315"/>
    <property type="project" value="MGI"/>
</dbReference>
<dbReference type="GO" id="GO:0060427">
    <property type="term" value="P:lung connective tissue development"/>
    <property type="evidence" value="ECO:0000315"/>
    <property type="project" value="MGI"/>
</dbReference>
<dbReference type="GO" id="GO:0036446">
    <property type="term" value="P:myofibroblast differentiation"/>
    <property type="evidence" value="ECO:0000315"/>
    <property type="project" value="MGI"/>
</dbReference>
<dbReference type="GO" id="GO:0060658">
    <property type="term" value="P:nipple morphogenesis"/>
    <property type="evidence" value="ECO:0000315"/>
    <property type="project" value="MGI"/>
</dbReference>
<dbReference type="GO" id="GO:0007567">
    <property type="term" value="P:parturition"/>
    <property type="evidence" value="ECO:0000315"/>
    <property type="project" value="MGI"/>
</dbReference>
<dbReference type="CDD" id="cd15965">
    <property type="entry name" value="7tmA_RXFP1_LGR7"/>
    <property type="match status" value="1"/>
</dbReference>
<dbReference type="CDD" id="cd00112">
    <property type="entry name" value="LDLa"/>
    <property type="match status" value="1"/>
</dbReference>
<dbReference type="FunFam" id="1.20.1070.10:FF:000023">
    <property type="entry name" value="Relaxin family peptide receptor 1"/>
    <property type="match status" value="1"/>
</dbReference>
<dbReference type="FunFam" id="3.80.10.10:FF:000162">
    <property type="entry name" value="Relaxin family peptide receptor 1"/>
    <property type="match status" value="1"/>
</dbReference>
<dbReference type="FunFam" id="3.80.10.10:FF:000203">
    <property type="entry name" value="Relaxin family peptide receptor 1"/>
    <property type="match status" value="1"/>
</dbReference>
<dbReference type="FunFam" id="4.10.400.10:FF:000014">
    <property type="entry name" value="Relaxin family peptide receptor 1"/>
    <property type="match status" value="1"/>
</dbReference>
<dbReference type="Gene3D" id="4.10.400.10">
    <property type="entry name" value="Low-density Lipoprotein Receptor"/>
    <property type="match status" value="1"/>
</dbReference>
<dbReference type="Gene3D" id="1.20.1070.10">
    <property type="entry name" value="Rhodopsin 7-helix transmembrane proteins"/>
    <property type="match status" value="1"/>
</dbReference>
<dbReference type="Gene3D" id="3.80.10.10">
    <property type="entry name" value="Ribonuclease Inhibitor"/>
    <property type="match status" value="2"/>
</dbReference>
<dbReference type="InterPro" id="IPR000276">
    <property type="entry name" value="GPCR_Rhodpsn"/>
</dbReference>
<dbReference type="InterPro" id="IPR017452">
    <property type="entry name" value="GPCR_Rhodpsn_7TM"/>
</dbReference>
<dbReference type="InterPro" id="IPR036055">
    <property type="entry name" value="LDL_receptor-like_sf"/>
</dbReference>
<dbReference type="InterPro" id="IPR023415">
    <property type="entry name" value="LDLR_class-A_CS"/>
</dbReference>
<dbReference type="InterPro" id="IPR002172">
    <property type="entry name" value="LDrepeatLR_classA_rpt"/>
</dbReference>
<dbReference type="InterPro" id="IPR001611">
    <property type="entry name" value="Leu-rich_rpt"/>
</dbReference>
<dbReference type="InterPro" id="IPR003591">
    <property type="entry name" value="Leu-rich_rpt_typical-subtyp"/>
</dbReference>
<dbReference type="InterPro" id="IPR032675">
    <property type="entry name" value="LRR_dom_sf"/>
</dbReference>
<dbReference type="InterPro" id="IPR008112">
    <property type="entry name" value="Relaxin_rcpt"/>
</dbReference>
<dbReference type="PANTHER" id="PTHR24372">
    <property type="entry name" value="GLYCOPROTEIN HORMONE RECEPTOR"/>
    <property type="match status" value="1"/>
</dbReference>
<dbReference type="PANTHER" id="PTHR24372:SF68">
    <property type="entry name" value="RELAXIN RECEPTOR 1"/>
    <property type="match status" value="1"/>
</dbReference>
<dbReference type="Pfam" id="PF00001">
    <property type="entry name" value="7tm_1"/>
    <property type="match status" value="1"/>
</dbReference>
<dbReference type="Pfam" id="PF00057">
    <property type="entry name" value="Ldl_recept_a"/>
    <property type="match status" value="1"/>
</dbReference>
<dbReference type="Pfam" id="PF13855">
    <property type="entry name" value="LRR_8"/>
    <property type="match status" value="2"/>
</dbReference>
<dbReference type="PRINTS" id="PR00237">
    <property type="entry name" value="GPCRRHODOPSN"/>
</dbReference>
<dbReference type="PRINTS" id="PR01739">
    <property type="entry name" value="RELAXINR"/>
</dbReference>
<dbReference type="SMART" id="SM00192">
    <property type="entry name" value="LDLa"/>
    <property type="match status" value="1"/>
</dbReference>
<dbReference type="SMART" id="SM00365">
    <property type="entry name" value="LRR_SD22"/>
    <property type="match status" value="5"/>
</dbReference>
<dbReference type="SMART" id="SM00369">
    <property type="entry name" value="LRR_TYP"/>
    <property type="match status" value="10"/>
</dbReference>
<dbReference type="SUPFAM" id="SSF81321">
    <property type="entry name" value="Family A G protein-coupled receptor-like"/>
    <property type="match status" value="1"/>
</dbReference>
<dbReference type="SUPFAM" id="SSF52058">
    <property type="entry name" value="L domain-like"/>
    <property type="match status" value="1"/>
</dbReference>
<dbReference type="SUPFAM" id="SSF57424">
    <property type="entry name" value="LDL receptor-like module"/>
    <property type="match status" value="1"/>
</dbReference>
<dbReference type="PROSITE" id="PS50262">
    <property type="entry name" value="G_PROTEIN_RECEP_F1_2"/>
    <property type="match status" value="1"/>
</dbReference>
<dbReference type="PROSITE" id="PS01209">
    <property type="entry name" value="LDLRA_1"/>
    <property type="match status" value="1"/>
</dbReference>
<dbReference type="PROSITE" id="PS50068">
    <property type="entry name" value="LDLRA_2"/>
    <property type="match status" value="1"/>
</dbReference>
<dbReference type="PROSITE" id="PS51450">
    <property type="entry name" value="LRR"/>
    <property type="match status" value="10"/>
</dbReference>
<evidence type="ECO:0000250" key="1"/>
<evidence type="ECO:0000250" key="2">
    <source>
        <dbReference type="UniProtKB" id="Q9HBX9"/>
    </source>
</evidence>
<evidence type="ECO:0000255" key="3"/>
<evidence type="ECO:0000255" key="4">
    <source>
        <dbReference type="PROSITE-ProRule" id="PRU00124"/>
    </source>
</evidence>
<evidence type="ECO:0000255" key="5">
    <source>
        <dbReference type="PROSITE-ProRule" id="PRU00521"/>
    </source>
</evidence>
<evidence type="ECO:0000269" key="6">
    <source>
    </source>
</evidence>
<name>RXFP1_MOUSE</name>
<protein>
    <recommendedName>
        <fullName>Relaxin receptor 1</fullName>
    </recommendedName>
    <alternativeName>
        <fullName>Leucine-rich repeat-containing G-protein coupled receptor 7</fullName>
    </alternativeName>
    <alternativeName>
        <fullName>Relaxin family peptide receptor 1</fullName>
    </alternativeName>
</protein>
<reference key="1">
    <citation type="journal article" date="2004" name="Clin. Exp. Pharmacol. Physiol.">
        <title>Identification and characterization of the mouse and rat relaxin receptors as the novel orthologues of human leucine-rich repeat-containing G-protein-coupled receptor 7.</title>
        <authorList>
            <person name="Scott D.J."/>
            <person name="Layfield S."/>
            <person name="Riesewijk A."/>
            <person name="Morita H."/>
            <person name="Tregear G.W."/>
            <person name="Bathgate R.A.D."/>
        </authorList>
    </citation>
    <scope>NUCLEOTIDE SEQUENCE [MRNA]</scope>
    <scope>FUNCTION</scope>
    <source>
        <strain>C57BL/6J</strain>
    </source>
</reference>
<reference key="2">
    <citation type="journal article" date="2003" name="Proc. Natl. Acad. Sci. U.S.A.">
        <title>The G protein-coupled receptor repertoires of human and mouse.</title>
        <authorList>
            <person name="Vassilatis D.K."/>
            <person name="Hohmann J.G."/>
            <person name="Zeng H."/>
            <person name="Li F."/>
            <person name="Ranchalis J.E."/>
            <person name="Mortrud M.T."/>
            <person name="Brown A."/>
            <person name="Rodriguez S.S."/>
            <person name="Weller J.R."/>
            <person name="Wright A.C."/>
            <person name="Bergmann J.E."/>
            <person name="Gaitanaris G.A."/>
        </authorList>
    </citation>
    <scope>NUCLEOTIDE SEQUENCE [LARGE SCALE MRNA] OF 389-420</scope>
</reference>
<comment type="function">
    <text evidence="6">Receptor for relaxins. The activity of this receptor is mediated by G proteins leading to stimulation of adenylate cyclase and an increase of cAMP. Binding of the ligand may also activate a tyrosine kinase pathway that inhibits the activity of a phosphodiesterase that degrades cAMP.</text>
</comment>
<comment type="subunit">
    <text evidence="2">Interacts with C1QTNF8.</text>
</comment>
<comment type="subcellular location">
    <subcellularLocation>
        <location>Cell membrane</location>
        <topology>Multi-pass membrane protein</topology>
    </subcellularLocation>
</comment>
<comment type="similarity">
    <text evidence="5">Belongs to the G-protein coupled receptor 1 family.</text>
</comment>
<gene>
    <name type="primary">Rxfp1</name>
    <name type="synonym">Gm1018</name>
    <name type="synonym">Lgr7</name>
</gene>
<feature type="chain" id="PRO_0000303887" description="Relaxin receptor 1">
    <location>
        <begin position="1"/>
        <end position="758"/>
    </location>
</feature>
<feature type="topological domain" description="Extracellular" evidence="3">
    <location>
        <begin position="1"/>
        <end position="409"/>
    </location>
</feature>
<feature type="transmembrane region" description="Helical; Name=1" evidence="3">
    <location>
        <begin position="410"/>
        <end position="430"/>
    </location>
</feature>
<feature type="topological domain" description="Cytoplasmic" evidence="3">
    <location>
        <begin position="431"/>
        <end position="443"/>
    </location>
</feature>
<feature type="transmembrane region" description="Helical; Name=2" evidence="3">
    <location>
        <begin position="444"/>
        <end position="464"/>
    </location>
</feature>
<feature type="topological domain" description="Extracellular" evidence="3">
    <location>
        <begin position="465"/>
        <end position="486"/>
    </location>
</feature>
<feature type="transmembrane region" description="Helical; Name=3" evidence="3">
    <location>
        <begin position="487"/>
        <end position="507"/>
    </location>
</feature>
<feature type="topological domain" description="Cytoplasmic" evidence="3">
    <location>
        <begin position="508"/>
        <end position="527"/>
    </location>
</feature>
<feature type="transmembrane region" description="Helical; Name=4" evidence="3">
    <location>
        <begin position="528"/>
        <end position="548"/>
    </location>
</feature>
<feature type="topological domain" description="Extracellular" evidence="3">
    <location>
        <begin position="549"/>
        <end position="577"/>
    </location>
</feature>
<feature type="transmembrane region" description="Helical; Name=5" evidence="3">
    <location>
        <begin position="578"/>
        <end position="598"/>
    </location>
</feature>
<feature type="topological domain" description="Cytoplasmic" evidence="3">
    <location>
        <begin position="599"/>
        <end position="629"/>
    </location>
</feature>
<feature type="transmembrane region" description="Helical; Name=6" evidence="3">
    <location>
        <begin position="630"/>
        <end position="650"/>
    </location>
</feature>
<feature type="topological domain" description="Extracellular" evidence="3">
    <location>
        <position position="651"/>
    </location>
</feature>
<feature type="transmembrane region" description="Helical; Name=7" evidence="3">
    <location>
        <begin position="652"/>
        <end position="672"/>
    </location>
</feature>
<feature type="topological domain" description="Cytoplasmic" evidence="3">
    <location>
        <begin position="673"/>
        <end position="758"/>
    </location>
</feature>
<feature type="domain" description="LDL-receptor class A" evidence="4">
    <location>
        <begin position="26"/>
        <end position="63"/>
    </location>
</feature>
<feature type="repeat" description="LRR 1">
    <location>
        <begin position="127"/>
        <end position="148"/>
    </location>
</feature>
<feature type="repeat" description="LRR 2">
    <location>
        <begin position="151"/>
        <end position="172"/>
    </location>
</feature>
<feature type="repeat" description="LRR 3">
    <location>
        <begin position="175"/>
        <end position="196"/>
    </location>
</feature>
<feature type="repeat" description="LRR 4">
    <location>
        <begin position="199"/>
        <end position="220"/>
    </location>
</feature>
<feature type="repeat" description="LRR 5">
    <location>
        <begin position="223"/>
        <end position="244"/>
    </location>
</feature>
<feature type="repeat" description="LRR 6">
    <location>
        <begin position="248"/>
        <end position="269"/>
    </location>
</feature>
<feature type="repeat" description="LRR 7">
    <location>
        <begin position="272"/>
        <end position="293"/>
    </location>
</feature>
<feature type="repeat" description="LRR 8">
    <location>
        <begin position="296"/>
        <end position="317"/>
    </location>
</feature>
<feature type="repeat" description="LRR 9">
    <location>
        <begin position="320"/>
        <end position="341"/>
    </location>
</feature>
<feature type="repeat" description="LRR 10">
    <location>
        <begin position="344"/>
        <end position="365"/>
    </location>
</feature>
<feature type="binding site" evidence="1">
    <location>
        <position position="45"/>
    </location>
    <ligand>
        <name>Ca(2+)</name>
        <dbReference type="ChEBI" id="CHEBI:29108"/>
    </ligand>
</feature>
<feature type="binding site" evidence="1">
    <location>
        <position position="48"/>
    </location>
    <ligand>
        <name>Ca(2+)</name>
        <dbReference type="ChEBI" id="CHEBI:29108"/>
    </ligand>
</feature>
<feature type="binding site" evidence="1">
    <location>
        <position position="50"/>
    </location>
    <ligand>
        <name>Ca(2+)</name>
        <dbReference type="ChEBI" id="CHEBI:29108"/>
    </ligand>
</feature>
<feature type="binding site" evidence="1">
    <location>
        <position position="52"/>
    </location>
    <ligand>
        <name>Ca(2+)</name>
        <dbReference type="ChEBI" id="CHEBI:29108"/>
    </ligand>
</feature>
<feature type="binding site" evidence="1">
    <location>
        <position position="58"/>
    </location>
    <ligand>
        <name>Ca(2+)</name>
        <dbReference type="ChEBI" id="CHEBI:29108"/>
    </ligand>
</feature>
<feature type="binding site" evidence="1">
    <location>
        <position position="59"/>
    </location>
    <ligand>
        <name>Ca(2+)</name>
        <dbReference type="ChEBI" id="CHEBI:29108"/>
    </ligand>
</feature>
<feature type="glycosylation site" description="N-linked (GlcNAc...) asparagine" evidence="3">
    <location>
        <position position="36"/>
    </location>
</feature>
<feature type="glycosylation site" description="N-linked (GlcNAc...) asparagine" evidence="3">
    <location>
        <position position="127"/>
    </location>
</feature>
<feature type="glycosylation site" description="N-linked (GlcNAc...) asparagine" evidence="3">
    <location>
        <position position="264"/>
    </location>
</feature>
<feature type="glycosylation site" description="N-linked (GlcNAc...) asparagine" evidence="3">
    <location>
        <position position="272"/>
    </location>
</feature>
<feature type="glycosylation site" description="N-linked (GlcNAc...) asparagine" evidence="3">
    <location>
        <position position="325"/>
    </location>
</feature>
<feature type="glycosylation site" description="N-linked (GlcNAc...) asparagine" evidence="3">
    <location>
        <position position="368"/>
    </location>
</feature>
<feature type="disulfide bond" evidence="1">
    <location>
        <begin position="27"/>
        <end position="40"/>
    </location>
</feature>
<feature type="disulfide bond" evidence="1">
    <location>
        <begin position="34"/>
        <end position="53"/>
    </location>
</feature>
<feature type="disulfide bond" evidence="1">
    <location>
        <begin position="47"/>
        <end position="62"/>
    </location>
</feature>
<feature type="disulfide bond" evidence="1">
    <location>
        <begin position="485"/>
        <end position="563"/>
    </location>
</feature>